<keyword id="KW-0067">ATP-binding</keyword>
<keyword id="KW-0418">Kinase</keyword>
<keyword id="KW-0547">Nucleotide-binding</keyword>
<keyword id="KW-0597">Phosphoprotein</keyword>
<keyword id="KW-1185">Reference proteome</keyword>
<keyword id="KW-0723">Serine/threonine-protein kinase</keyword>
<keyword id="KW-0808">Transferase</keyword>
<proteinExistence type="evidence at transcript level"/>
<protein>
    <recommendedName>
        <fullName>Putative glycogen synthase kinase-3 homolog</fullName>
        <shortName>GSK-3</shortName>
        <ecNumber>2.7.11.26</ecNumber>
    </recommendedName>
    <alternativeName>
        <fullName>Protein gasket</fullName>
    </alternativeName>
</protein>
<evidence type="ECO:0000250" key="1"/>
<evidence type="ECO:0000255" key="2">
    <source>
        <dbReference type="PROSITE-ProRule" id="PRU00159"/>
    </source>
</evidence>
<evidence type="ECO:0000255" key="3">
    <source>
        <dbReference type="PROSITE-ProRule" id="PRU10027"/>
    </source>
</evidence>
<evidence type="ECO:0000256" key="4">
    <source>
        <dbReference type="SAM" id="MobiDB-lite"/>
    </source>
</evidence>
<evidence type="ECO:0000305" key="5"/>
<organism>
    <name type="scientific">Drosophila melanogaster</name>
    <name type="common">Fruit fly</name>
    <dbReference type="NCBI Taxonomy" id="7227"/>
    <lineage>
        <taxon>Eukaryota</taxon>
        <taxon>Metazoa</taxon>
        <taxon>Ecdysozoa</taxon>
        <taxon>Arthropoda</taxon>
        <taxon>Hexapoda</taxon>
        <taxon>Insecta</taxon>
        <taxon>Pterygota</taxon>
        <taxon>Neoptera</taxon>
        <taxon>Endopterygota</taxon>
        <taxon>Diptera</taxon>
        <taxon>Brachycera</taxon>
        <taxon>Muscomorpha</taxon>
        <taxon>Ephydroidea</taxon>
        <taxon>Drosophilidae</taxon>
        <taxon>Drosophila</taxon>
        <taxon>Sophophora</taxon>
    </lineage>
</organism>
<accession>P83101</accession>
<sequence>MASQSKNSGLTNKVTTVVATNAFGADVMSEISYTDAKVVGNGSFGVVFQAKMVPSNEMVAIKKVLQDRRFKNRELQIMRKLRHDNIITLKWFFFSSGEKRDEVYLNLVMEFLPETLYKVERQYARAKQTLPVNFVRLYMYQLLRSMGYLHSLGFCHRDIKPQNMLLDSETGVLKLCDFGSAKQLISGEPNVSYICSRYYRAPELIFGSTDYTTKIDMWSAGCVMSELLLGQLIFPGDSGVDQIVEIVKVMGTPTSEQLHDMNPHYKQFKLPELKPHPWSKVFRIRTPAEAIDLVSKMLIYSPNARVSPLMGCAHPFFDELRQDPHQQLPNGRSLPPLFNFTDYEKTIEPDTMPLLLPRAQGSSTTKEPSAAHRNRNTAGEESPRKTEDSQKPATAALSKSPGPSGKALESPPGFLQHDLGNGDHVAVGTMPMEPLTLEQNHFAAESYAVGEDAEDNLEEDVGDENDYDYDDGGQCNSTYISDDMDEASESDDDDFEEEDEN</sequence>
<reference key="1">
    <citation type="journal article" date="2000" name="Science">
        <title>The genome sequence of Drosophila melanogaster.</title>
        <authorList>
            <person name="Adams M.D."/>
            <person name="Celniker S.E."/>
            <person name="Holt R.A."/>
            <person name="Evans C.A."/>
            <person name="Gocayne J.D."/>
            <person name="Amanatides P.G."/>
            <person name="Scherer S.E."/>
            <person name="Li P.W."/>
            <person name="Hoskins R.A."/>
            <person name="Galle R.F."/>
            <person name="George R.A."/>
            <person name="Lewis S.E."/>
            <person name="Richards S."/>
            <person name="Ashburner M."/>
            <person name="Henderson S.N."/>
            <person name="Sutton G.G."/>
            <person name="Wortman J.R."/>
            <person name="Yandell M.D."/>
            <person name="Zhang Q."/>
            <person name="Chen L.X."/>
            <person name="Brandon R.C."/>
            <person name="Rogers Y.-H.C."/>
            <person name="Blazej R.G."/>
            <person name="Champe M."/>
            <person name="Pfeiffer B.D."/>
            <person name="Wan K.H."/>
            <person name="Doyle C."/>
            <person name="Baxter E.G."/>
            <person name="Helt G."/>
            <person name="Nelson C.R."/>
            <person name="Miklos G.L.G."/>
            <person name="Abril J.F."/>
            <person name="Agbayani A."/>
            <person name="An H.-J."/>
            <person name="Andrews-Pfannkoch C."/>
            <person name="Baldwin D."/>
            <person name="Ballew R.M."/>
            <person name="Basu A."/>
            <person name="Baxendale J."/>
            <person name="Bayraktaroglu L."/>
            <person name="Beasley E.M."/>
            <person name="Beeson K.Y."/>
            <person name="Benos P.V."/>
            <person name="Berman B.P."/>
            <person name="Bhandari D."/>
            <person name="Bolshakov S."/>
            <person name="Borkova D."/>
            <person name="Botchan M.R."/>
            <person name="Bouck J."/>
            <person name="Brokstein P."/>
            <person name="Brottier P."/>
            <person name="Burtis K.C."/>
            <person name="Busam D.A."/>
            <person name="Butler H."/>
            <person name="Cadieu E."/>
            <person name="Center A."/>
            <person name="Chandra I."/>
            <person name="Cherry J.M."/>
            <person name="Cawley S."/>
            <person name="Dahlke C."/>
            <person name="Davenport L.B."/>
            <person name="Davies P."/>
            <person name="de Pablos B."/>
            <person name="Delcher A."/>
            <person name="Deng Z."/>
            <person name="Mays A.D."/>
            <person name="Dew I."/>
            <person name="Dietz S.M."/>
            <person name="Dodson K."/>
            <person name="Doup L.E."/>
            <person name="Downes M."/>
            <person name="Dugan-Rocha S."/>
            <person name="Dunkov B.C."/>
            <person name="Dunn P."/>
            <person name="Durbin K.J."/>
            <person name="Evangelista C.C."/>
            <person name="Ferraz C."/>
            <person name="Ferriera S."/>
            <person name="Fleischmann W."/>
            <person name="Fosler C."/>
            <person name="Gabrielian A.E."/>
            <person name="Garg N.S."/>
            <person name="Gelbart W.M."/>
            <person name="Glasser K."/>
            <person name="Glodek A."/>
            <person name="Gong F."/>
            <person name="Gorrell J.H."/>
            <person name="Gu Z."/>
            <person name="Guan P."/>
            <person name="Harris M."/>
            <person name="Harris N.L."/>
            <person name="Harvey D.A."/>
            <person name="Heiman T.J."/>
            <person name="Hernandez J.R."/>
            <person name="Houck J."/>
            <person name="Hostin D."/>
            <person name="Houston K.A."/>
            <person name="Howland T.J."/>
            <person name="Wei M.-H."/>
            <person name="Ibegwam C."/>
            <person name="Jalali M."/>
            <person name="Kalush F."/>
            <person name="Karpen G.H."/>
            <person name="Ke Z."/>
            <person name="Kennison J.A."/>
            <person name="Ketchum K.A."/>
            <person name="Kimmel B.E."/>
            <person name="Kodira C.D."/>
            <person name="Kraft C.L."/>
            <person name="Kravitz S."/>
            <person name="Kulp D."/>
            <person name="Lai Z."/>
            <person name="Lasko P."/>
            <person name="Lei Y."/>
            <person name="Levitsky A.A."/>
            <person name="Li J.H."/>
            <person name="Li Z."/>
            <person name="Liang Y."/>
            <person name="Lin X."/>
            <person name="Liu X."/>
            <person name="Mattei B."/>
            <person name="McIntosh T.C."/>
            <person name="McLeod M.P."/>
            <person name="McPherson D."/>
            <person name="Merkulov G."/>
            <person name="Milshina N.V."/>
            <person name="Mobarry C."/>
            <person name="Morris J."/>
            <person name="Moshrefi A."/>
            <person name="Mount S.M."/>
            <person name="Moy M."/>
            <person name="Murphy B."/>
            <person name="Murphy L."/>
            <person name="Muzny D.M."/>
            <person name="Nelson D.L."/>
            <person name="Nelson D.R."/>
            <person name="Nelson K.A."/>
            <person name="Nixon K."/>
            <person name="Nusskern D.R."/>
            <person name="Pacleb J.M."/>
            <person name="Palazzolo M."/>
            <person name="Pittman G.S."/>
            <person name="Pan S."/>
            <person name="Pollard J."/>
            <person name="Puri V."/>
            <person name="Reese M.G."/>
            <person name="Reinert K."/>
            <person name="Remington K."/>
            <person name="Saunders R.D.C."/>
            <person name="Scheeler F."/>
            <person name="Shen H."/>
            <person name="Shue B.C."/>
            <person name="Siden-Kiamos I."/>
            <person name="Simpson M."/>
            <person name="Skupski M.P."/>
            <person name="Smith T.J."/>
            <person name="Spier E."/>
            <person name="Spradling A.C."/>
            <person name="Stapleton M."/>
            <person name="Strong R."/>
            <person name="Sun E."/>
            <person name="Svirskas R."/>
            <person name="Tector C."/>
            <person name="Turner R."/>
            <person name="Venter E."/>
            <person name="Wang A.H."/>
            <person name="Wang X."/>
            <person name="Wang Z.-Y."/>
            <person name="Wassarman D.A."/>
            <person name="Weinstock G.M."/>
            <person name="Weissenbach J."/>
            <person name="Williams S.M."/>
            <person name="Woodage T."/>
            <person name="Worley K.C."/>
            <person name="Wu D."/>
            <person name="Yang S."/>
            <person name="Yao Q.A."/>
            <person name="Ye J."/>
            <person name="Yeh R.-F."/>
            <person name="Zaveri J.S."/>
            <person name="Zhan M."/>
            <person name="Zhang G."/>
            <person name="Zhao Q."/>
            <person name="Zheng L."/>
            <person name="Zheng X.H."/>
            <person name="Zhong F.N."/>
            <person name="Zhong W."/>
            <person name="Zhou X."/>
            <person name="Zhu S.C."/>
            <person name="Zhu X."/>
            <person name="Smith H.O."/>
            <person name="Gibbs R.A."/>
            <person name="Myers E.W."/>
            <person name="Rubin G.M."/>
            <person name="Venter J.C."/>
        </authorList>
    </citation>
    <scope>NUCLEOTIDE SEQUENCE [LARGE SCALE GENOMIC DNA]</scope>
    <source>
        <strain>Berkeley</strain>
    </source>
</reference>
<reference key="2">
    <citation type="journal article" date="2002" name="Genome Biol.">
        <title>Annotation of the Drosophila melanogaster euchromatic genome: a systematic review.</title>
        <authorList>
            <person name="Misra S."/>
            <person name="Crosby M.A."/>
            <person name="Mungall C.J."/>
            <person name="Matthews B.B."/>
            <person name="Campbell K.S."/>
            <person name="Hradecky P."/>
            <person name="Huang Y."/>
            <person name="Kaminker J.S."/>
            <person name="Millburn G.H."/>
            <person name="Prochnik S.E."/>
            <person name="Smith C.D."/>
            <person name="Tupy J.L."/>
            <person name="Whitfield E.J."/>
            <person name="Bayraktaroglu L."/>
            <person name="Berman B.P."/>
            <person name="Bettencourt B.R."/>
            <person name="Celniker S.E."/>
            <person name="de Grey A.D.N.J."/>
            <person name="Drysdale R.A."/>
            <person name="Harris N.L."/>
            <person name="Richter J."/>
            <person name="Russo S."/>
            <person name="Schroeder A.J."/>
            <person name="Shu S.Q."/>
            <person name="Stapleton M."/>
            <person name="Yamada C."/>
            <person name="Ashburner M."/>
            <person name="Gelbart W.M."/>
            <person name="Rubin G.M."/>
            <person name="Lewis S.E."/>
        </authorList>
    </citation>
    <scope>GENOME REANNOTATION</scope>
    <source>
        <strain>Berkeley</strain>
    </source>
</reference>
<reference key="3">
    <citation type="journal article" date="2002" name="Genome Biol.">
        <title>A Drosophila full-length cDNA resource.</title>
        <authorList>
            <person name="Stapleton M."/>
            <person name="Carlson J.W."/>
            <person name="Brokstein P."/>
            <person name="Yu C."/>
            <person name="Champe M."/>
            <person name="George R.A."/>
            <person name="Guarin H."/>
            <person name="Kronmiller B."/>
            <person name="Pacleb J.M."/>
            <person name="Park S."/>
            <person name="Wan K.H."/>
            <person name="Rubin G.M."/>
            <person name="Celniker S.E."/>
        </authorList>
    </citation>
    <scope>NUCLEOTIDE SEQUENCE [LARGE SCALE MRNA]</scope>
    <source>
        <strain>Berkeley</strain>
        <tissue>Testis</tissue>
    </source>
</reference>
<feature type="chain" id="PRO_0000085984" description="Putative glycogen synthase kinase-3 homolog">
    <location>
        <begin position="1"/>
        <end position="501"/>
    </location>
</feature>
<feature type="domain" description="Protein kinase" evidence="2">
    <location>
        <begin position="33"/>
        <end position="317"/>
    </location>
</feature>
<feature type="region of interest" description="Disordered" evidence="4">
    <location>
        <begin position="355"/>
        <end position="427"/>
    </location>
</feature>
<feature type="region of interest" description="Disordered" evidence="4">
    <location>
        <begin position="446"/>
        <end position="501"/>
    </location>
</feature>
<feature type="compositionally biased region" description="Basic and acidic residues" evidence="4">
    <location>
        <begin position="381"/>
        <end position="390"/>
    </location>
</feature>
<feature type="compositionally biased region" description="Acidic residues" evidence="4">
    <location>
        <begin position="451"/>
        <end position="471"/>
    </location>
</feature>
<feature type="compositionally biased region" description="Acidic residues" evidence="4">
    <location>
        <begin position="482"/>
        <end position="501"/>
    </location>
</feature>
<feature type="active site" description="Proton acceptor" evidence="2 3">
    <location>
        <position position="158"/>
    </location>
</feature>
<feature type="binding site" evidence="2">
    <location>
        <begin position="39"/>
        <end position="47"/>
    </location>
    <ligand>
        <name>ATP</name>
        <dbReference type="ChEBI" id="CHEBI:30616"/>
    </ligand>
</feature>
<feature type="binding site" evidence="2">
    <location>
        <position position="62"/>
    </location>
    <ligand>
        <name>ATP</name>
        <dbReference type="ChEBI" id="CHEBI:30616"/>
    </ligand>
</feature>
<feature type="modified residue" description="Phosphotyrosine" evidence="1">
    <location>
        <position position="193"/>
    </location>
</feature>
<name>GSK3H_DROME</name>
<dbReference type="EC" id="2.7.11.26"/>
<dbReference type="EMBL" id="AE014297">
    <property type="protein sequence ID" value="AAN14270.1"/>
    <property type="molecule type" value="Genomic_DNA"/>
</dbReference>
<dbReference type="EMBL" id="BT001338">
    <property type="protein sequence ID" value="AAN71093.1"/>
    <property type="molecule type" value="mRNA"/>
</dbReference>
<dbReference type="RefSeq" id="NP_733426.1">
    <property type="nucleotide sequence ID" value="NM_170547.3"/>
</dbReference>
<dbReference type="SMR" id="P83101"/>
<dbReference type="BioGRID" id="76872">
    <property type="interactions" value="2"/>
</dbReference>
<dbReference type="FunCoup" id="P83101">
    <property type="interactions" value="249"/>
</dbReference>
<dbReference type="IntAct" id="P83101">
    <property type="interactions" value="3"/>
</dbReference>
<dbReference type="STRING" id="7227.FBpp0085145"/>
<dbReference type="PaxDb" id="7227-FBpp0085145"/>
<dbReference type="DNASU" id="318552"/>
<dbReference type="EnsemblMetazoa" id="FBtr0085784">
    <property type="protein sequence ID" value="FBpp0085145"/>
    <property type="gene ID" value="FBgn0046332"/>
</dbReference>
<dbReference type="GeneID" id="318552"/>
<dbReference type="KEGG" id="dme:Dmel_CG31003"/>
<dbReference type="UCSC" id="CG31003-RA">
    <property type="organism name" value="d. melanogaster"/>
</dbReference>
<dbReference type="AGR" id="FB:FBgn0046332"/>
<dbReference type="CTD" id="318552"/>
<dbReference type="FlyBase" id="FBgn0046332">
    <property type="gene designation" value="gskt"/>
</dbReference>
<dbReference type="VEuPathDB" id="VectorBase:FBgn0046332"/>
<dbReference type="eggNOG" id="KOG0658">
    <property type="taxonomic scope" value="Eukaryota"/>
</dbReference>
<dbReference type="GeneTree" id="ENSGT00520000055635"/>
<dbReference type="HOGENOM" id="CLU_000288_181_20_1"/>
<dbReference type="InParanoid" id="P83101"/>
<dbReference type="OMA" id="LKPHPWS"/>
<dbReference type="OrthoDB" id="272141at2759"/>
<dbReference type="PhylomeDB" id="P83101"/>
<dbReference type="Reactome" id="R-DME-195253">
    <property type="pathway name" value="Degradation of beta-catenin by the destruction complex"/>
</dbReference>
<dbReference type="Reactome" id="R-DME-196299">
    <property type="pathway name" value="Beta-catenin phosphorylation cascade"/>
</dbReference>
<dbReference type="Reactome" id="R-DME-3371453">
    <property type="pathway name" value="Regulation of HSF1-mediated heat shock response"/>
</dbReference>
<dbReference type="Reactome" id="R-DME-399956">
    <property type="pathway name" value="CRMPs in Sema3A signaling"/>
</dbReference>
<dbReference type="Reactome" id="R-DME-4641262">
    <property type="pathway name" value="Disassembly of the destruction complex and recruitment of AXIN to the membrane"/>
</dbReference>
<dbReference type="Reactome" id="R-DME-5610785">
    <property type="pathway name" value="GLI3 is processed to GLI3R by the proteasome"/>
</dbReference>
<dbReference type="Reactome" id="R-DME-9762114">
    <property type="pathway name" value="GSK3B and BTRC:CUL1-mediated-degradation of NFE2L2"/>
</dbReference>
<dbReference type="Reactome" id="R-DME-9856649">
    <property type="pathway name" value="Transcriptional and post-translational regulation of MITF-M expression and activity"/>
</dbReference>
<dbReference type="SignaLink" id="P83101"/>
<dbReference type="BioGRID-ORCS" id="318552">
    <property type="hits" value="0 hits in 3 CRISPR screens"/>
</dbReference>
<dbReference type="GenomeRNAi" id="318552"/>
<dbReference type="PRO" id="PR:P83101"/>
<dbReference type="Proteomes" id="UP000000803">
    <property type="component" value="Chromosome 3R"/>
</dbReference>
<dbReference type="Bgee" id="FBgn0046332">
    <property type="expression patterns" value="Expressed in early elongation stage spermatid (Drosophila) in testis and 24 other cell types or tissues"/>
</dbReference>
<dbReference type="GO" id="GO:0005737">
    <property type="term" value="C:cytoplasm"/>
    <property type="evidence" value="ECO:0000250"/>
    <property type="project" value="FlyBase"/>
</dbReference>
<dbReference type="GO" id="GO:0005524">
    <property type="term" value="F:ATP binding"/>
    <property type="evidence" value="ECO:0007669"/>
    <property type="project" value="UniProtKB-KW"/>
</dbReference>
<dbReference type="GO" id="GO:0004674">
    <property type="term" value="F:protein serine/threonine kinase activity"/>
    <property type="evidence" value="ECO:0000250"/>
    <property type="project" value="FlyBase"/>
</dbReference>
<dbReference type="GO" id="GO:0048232">
    <property type="term" value="P:male gamete generation"/>
    <property type="evidence" value="ECO:0000315"/>
    <property type="project" value="FlyBase"/>
</dbReference>
<dbReference type="CDD" id="cd14137">
    <property type="entry name" value="STKc_GSK3"/>
    <property type="match status" value="1"/>
</dbReference>
<dbReference type="FunFam" id="1.10.510.10:FF:000055">
    <property type="entry name" value="Glycogen synthase kinase-3 beta"/>
    <property type="match status" value="1"/>
</dbReference>
<dbReference type="FunFam" id="3.30.200.20:FF:000009">
    <property type="entry name" value="Glycogen synthase kinase-3 beta"/>
    <property type="match status" value="1"/>
</dbReference>
<dbReference type="Gene3D" id="3.30.200.20">
    <property type="entry name" value="Phosphorylase Kinase, domain 1"/>
    <property type="match status" value="1"/>
</dbReference>
<dbReference type="Gene3D" id="1.10.510.10">
    <property type="entry name" value="Transferase(Phosphotransferase) domain 1"/>
    <property type="match status" value="1"/>
</dbReference>
<dbReference type="InterPro" id="IPR050591">
    <property type="entry name" value="GSK-3"/>
</dbReference>
<dbReference type="InterPro" id="IPR011009">
    <property type="entry name" value="Kinase-like_dom_sf"/>
</dbReference>
<dbReference type="InterPro" id="IPR000719">
    <property type="entry name" value="Prot_kinase_dom"/>
</dbReference>
<dbReference type="InterPro" id="IPR017441">
    <property type="entry name" value="Protein_kinase_ATP_BS"/>
</dbReference>
<dbReference type="InterPro" id="IPR008271">
    <property type="entry name" value="Ser/Thr_kinase_AS"/>
</dbReference>
<dbReference type="InterPro" id="IPR039192">
    <property type="entry name" value="STKc_GSK3"/>
</dbReference>
<dbReference type="PANTHER" id="PTHR24057">
    <property type="entry name" value="GLYCOGEN SYNTHASE KINASE-3 ALPHA"/>
    <property type="match status" value="1"/>
</dbReference>
<dbReference type="PANTHER" id="PTHR24057:SF0">
    <property type="entry name" value="PROTEIN KINASE SHAGGY-RELATED"/>
    <property type="match status" value="1"/>
</dbReference>
<dbReference type="Pfam" id="PF00069">
    <property type="entry name" value="Pkinase"/>
    <property type="match status" value="1"/>
</dbReference>
<dbReference type="SMART" id="SM00220">
    <property type="entry name" value="S_TKc"/>
    <property type="match status" value="1"/>
</dbReference>
<dbReference type="SUPFAM" id="SSF56112">
    <property type="entry name" value="Protein kinase-like (PK-like)"/>
    <property type="match status" value="1"/>
</dbReference>
<dbReference type="PROSITE" id="PS00107">
    <property type="entry name" value="PROTEIN_KINASE_ATP"/>
    <property type="match status" value="1"/>
</dbReference>
<dbReference type="PROSITE" id="PS50011">
    <property type="entry name" value="PROTEIN_KINASE_DOM"/>
    <property type="match status" value="1"/>
</dbReference>
<dbReference type="PROSITE" id="PS00108">
    <property type="entry name" value="PROTEIN_KINASE_ST"/>
    <property type="match status" value="1"/>
</dbReference>
<comment type="catalytic activity">
    <reaction>
        <text>L-seryl-[tau protein] + ATP = O-phospho-L-seryl-[tau protein] + ADP + H(+)</text>
        <dbReference type="Rhea" id="RHEA:12801"/>
        <dbReference type="Rhea" id="RHEA-COMP:13701"/>
        <dbReference type="Rhea" id="RHEA-COMP:13702"/>
        <dbReference type="ChEBI" id="CHEBI:15378"/>
        <dbReference type="ChEBI" id="CHEBI:29999"/>
        <dbReference type="ChEBI" id="CHEBI:30616"/>
        <dbReference type="ChEBI" id="CHEBI:83421"/>
        <dbReference type="ChEBI" id="CHEBI:456216"/>
        <dbReference type="EC" id="2.7.11.26"/>
    </reaction>
</comment>
<comment type="catalytic activity">
    <reaction>
        <text>L-threonyl-[tau protein] + ATP = O-phospho-L-threonyl-[tau protein] + ADP + H(+)</text>
        <dbReference type="Rhea" id="RHEA:53904"/>
        <dbReference type="Rhea" id="RHEA-COMP:13703"/>
        <dbReference type="Rhea" id="RHEA-COMP:13704"/>
        <dbReference type="ChEBI" id="CHEBI:15378"/>
        <dbReference type="ChEBI" id="CHEBI:30013"/>
        <dbReference type="ChEBI" id="CHEBI:30616"/>
        <dbReference type="ChEBI" id="CHEBI:61977"/>
        <dbReference type="ChEBI" id="CHEBI:456216"/>
        <dbReference type="EC" id="2.7.11.26"/>
    </reaction>
</comment>
<comment type="PTM">
    <text evidence="1">Phosphorylation on Tyr-193 is necessary for the activity.</text>
</comment>
<comment type="similarity">
    <text evidence="5">Belongs to the protein kinase superfamily. CMGC Ser/Thr protein kinase family. GSK-3 subfamily.</text>
</comment>
<gene>
    <name type="primary">gskt</name>
    <name type="ORF">CG31003</name>
</gene>